<proteinExistence type="inferred from homology"/>
<organism>
    <name type="scientific">Bifidobacterium longum subsp. infantis (strain ATCC 15697 / DSM 20088 / JCM 1222 / NCTC 11817 / S12)</name>
    <dbReference type="NCBI Taxonomy" id="391904"/>
    <lineage>
        <taxon>Bacteria</taxon>
        <taxon>Bacillati</taxon>
        <taxon>Actinomycetota</taxon>
        <taxon>Actinomycetes</taxon>
        <taxon>Bifidobacteriales</taxon>
        <taxon>Bifidobacteriaceae</taxon>
        <taxon>Bifidobacterium</taxon>
    </lineage>
</organism>
<evidence type="ECO:0000255" key="1">
    <source>
        <dbReference type="HAMAP-Rule" id="MF_01369"/>
    </source>
</evidence>
<evidence type="ECO:0000305" key="2"/>
<protein>
    <recommendedName>
        <fullName evidence="1">Large ribosomal subunit protein uL23</fullName>
    </recommendedName>
    <alternativeName>
        <fullName evidence="2">50S ribosomal protein L23</fullName>
    </alternativeName>
</protein>
<accession>B7GND8</accession>
<accession>E8MN82</accession>
<dbReference type="EMBL" id="CP001095">
    <property type="protein sequence ID" value="ACJ53294.1"/>
    <property type="molecule type" value="Genomic_DNA"/>
</dbReference>
<dbReference type="EMBL" id="AP010889">
    <property type="protein sequence ID" value="BAJ69885.1"/>
    <property type="molecule type" value="Genomic_DNA"/>
</dbReference>
<dbReference type="RefSeq" id="WP_007053033.1">
    <property type="nucleotide sequence ID" value="NZ_JDTT01000039.1"/>
</dbReference>
<dbReference type="SMR" id="B7GND8"/>
<dbReference type="GeneID" id="85165059"/>
<dbReference type="KEGG" id="bln:Blon_2235"/>
<dbReference type="KEGG" id="blon:BLIJ_2308"/>
<dbReference type="PATRIC" id="fig|391904.8.peg.2310"/>
<dbReference type="HOGENOM" id="CLU_037562_3_2_11"/>
<dbReference type="Proteomes" id="UP000001360">
    <property type="component" value="Chromosome"/>
</dbReference>
<dbReference type="GO" id="GO:1990904">
    <property type="term" value="C:ribonucleoprotein complex"/>
    <property type="evidence" value="ECO:0007669"/>
    <property type="project" value="UniProtKB-KW"/>
</dbReference>
<dbReference type="GO" id="GO:0005840">
    <property type="term" value="C:ribosome"/>
    <property type="evidence" value="ECO:0007669"/>
    <property type="project" value="UniProtKB-KW"/>
</dbReference>
<dbReference type="GO" id="GO:0019843">
    <property type="term" value="F:rRNA binding"/>
    <property type="evidence" value="ECO:0007669"/>
    <property type="project" value="UniProtKB-UniRule"/>
</dbReference>
<dbReference type="GO" id="GO:0003735">
    <property type="term" value="F:structural constituent of ribosome"/>
    <property type="evidence" value="ECO:0007669"/>
    <property type="project" value="InterPro"/>
</dbReference>
<dbReference type="GO" id="GO:0006412">
    <property type="term" value="P:translation"/>
    <property type="evidence" value="ECO:0007669"/>
    <property type="project" value="UniProtKB-UniRule"/>
</dbReference>
<dbReference type="FunFam" id="3.30.70.330:FF:000001">
    <property type="entry name" value="50S ribosomal protein L23"/>
    <property type="match status" value="1"/>
</dbReference>
<dbReference type="Gene3D" id="3.30.70.330">
    <property type="match status" value="1"/>
</dbReference>
<dbReference type="HAMAP" id="MF_01369_B">
    <property type="entry name" value="Ribosomal_uL23_B"/>
    <property type="match status" value="1"/>
</dbReference>
<dbReference type="InterPro" id="IPR012677">
    <property type="entry name" value="Nucleotide-bd_a/b_plait_sf"/>
</dbReference>
<dbReference type="InterPro" id="IPR013025">
    <property type="entry name" value="Ribosomal_uL23-like"/>
</dbReference>
<dbReference type="InterPro" id="IPR012678">
    <property type="entry name" value="Ribosomal_uL23/eL15/eS24_sf"/>
</dbReference>
<dbReference type="NCBIfam" id="NF004359">
    <property type="entry name" value="PRK05738.1-3"/>
    <property type="match status" value="1"/>
</dbReference>
<dbReference type="NCBIfam" id="NF004363">
    <property type="entry name" value="PRK05738.2-4"/>
    <property type="match status" value="1"/>
</dbReference>
<dbReference type="NCBIfam" id="NF004364">
    <property type="entry name" value="PRK05738.2-5"/>
    <property type="match status" value="1"/>
</dbReference>
<dbReference type="PANTHER" id="PTHR11620">
    <property type="entry name" value="60S RIBOSOMAL PROTEIN L23A"/>
    <property type="match status" value="1"/>
</dbReference>
<dbReference type="Pfam" id="PF00276">
    <property type="entry name" value="Ribosomal_L23"/>
    <property type="match status" value="1"/>
</dbReference>
<dbReference type="SUPFAM" id="SSF54189">
    <property type="entry name" value="Ribosomal proteins S24e, L23 and L15e"/>
    <property type="match status" value="1"/>
</dbReference>
<reference key="1">
    <citation type="journal article" date="2008" name="Proc. Natl. Acad. Sci. U.S.A.">
        <title>The genome sequence of Bifidobacterium longum subsp. infantis reveals adaptations for milk utilization within the infant microbiome.</title>
        <authorList>
            <person name="Sela D.A."/>
            <person name="Chapman J."/>
            <person name="Adeuya A."/>
            <person name="Kim J.H."/>
            <person name="Chen F."/>
            <person name="Whitehead T.R."/>
            <person name="Lapidus A."/>
            <person name="Rokhsar D.S."/>
            <person name="Lebrilla C.B."/>
            <person name="German J.B."/>
            <person name="Price N.P."/>
            <person name="Richardson P.M."/>
            <person name="Mills D.A."/>
        </authorList>
    </citation>
    <scope>NUCLEOTIDE SEQUENCE [LARGE SCALE GENOMIC DNA]</scope>
    <source>
        <strain>ATCC 15697 / DSM 20088 / JCM 1222 / NCTC 11817 / S12</strain>
    </source>
</reference>
<reference key="2">
    <citation type="journal article" date="2011" name="Nature">
        <title>Bifidobacteria can protect from enteropathogenic infection through production of acetate.</title>
        <authorList>
            <person name="Fukuda S."/>
            <person name="Toh H."/>
            <person name="Hase K."/>
            <person name="Oshima K."/>
            <person name="Nakanishi Y."/>
            <person name="Yoshimura K."/>
            <person name="Tobe T."/>
            <person name="Clarke J.M."/>
            <person name="Topping D.L."/>
            <person name="Suzuki T."/>
            <person name="Taylor T.D."/>
            <person name="Itoh K."/>
            <person name="Kikuchi J."/>
            <person name="Morita H."/>
            <person name="Hattori M."/>
            <person name="Ohno H."/>
        </authorList>
    </citation>
    <scope>NUCLEOTIDE SEQUENCE [LARGE SCALE GENOMIC DNA]</scope>
    <source>
        <strain>ATCC 15697 / DSM 20088 / JCM 1222 / NCTC 11817 / S12</strain>
    </source>
</reference>
<gene>
    <name evidence="1" type="primary">rplW</name>
    <name type="ordered locus">Blon_2235</name>
    <name type="ordered locus">BLIJ_2308</name>
</gene>
<name>RL23_BIFLS</name>
<sequence length="98" mass="10794">MVAIHKPAHDVILKPVVSEKSYAASDRGQYTFVVAPDANKVQIKQAIEEIFKVKVTNVNTLNRAGKKQRTRTGFGQRASQKRAIVTVAEGQTIDIFGN</sequence>
<feature type="chain" id="PRO_1000184067" description="Large ribosomal subunit protein uL23">
    <location>
        <begin position="1"/>
        <end position="98"/>
    </location>
</feature>
<comment type="function">
    <text evidence="1">One of the early assembly proteins it binds 23S rRNA. One of the proteins that surrounds the polypeptide exit tunnel on the outside of the ribosome. Forms the main docking site for trigger factor binding to the ribosome.</text>
</comment>
<comment type="subunit">
    <text evidence="1">Part of the 50S ribosomal subunit. Contacts protein L29, and trigger factor when it is bound to the ribosome.</text>
</comment>
<comment type="similarity">
    <text evidence="1">Belongs to the universal ribosomal protein uL23 family.</text>
</comment>
<keyword id="KW-0687">Ribonucleoprotein</keyword>
<keyword id="KW-0689">Ribosomal protein</keyword>
<keyword id="KW-0694">RNA-binding</keyword>
<keyword id="KW-0699">rRNA-binding</keyword>